<comment type="subunit">
    <text evidence="1">Homodimer and heterodimers.</text>
</comment>
<comment type="subcellular location">
    <subcellularLocation>
        <location evidence="1">Cell membrane</location>
        <topology evidence="1">Multi-pass membrane protein</topology>
    </subcellularLocation>
</comment>
<comment type="similarity">
    <text evidence="4">Belongs to the Casparian strip membrane proteins (CASP) family.</text>
</comment>
<organism>
    <name type="scientific">Hordeum vulgare subsp. vulgare</name>
    <name type="common">Domesticated barley</name>
    <dbReference type="NCBI Taxonomy" id="112509"/>
    <lineage>
        <taxon>Eukaryota</taxon>
        <taxon>Viridiplantae</taxon>
        <taxon>Streptophyta</taxon>
        <taxon>Embryophyta</taxon>
        <taxon>Tracheophyta</taxon>
        <taxon>Spermatophyta</taxon>
        <taxon>Magnoliopsida</taxon>
        <taxon>Liliopsida</taxon>
        <taxon>Poales</taxon>
        <taxon>Poaceae</taxon>
        <taxon>BOP clade</taxon>
        <taxon>Pooideae</taxon>
        <taxon>Triticodae</taxon>
        <taxon>Triticeae</taxon>
        <taxon>Hordeinae</taxon>
        <taxon>Hordeum</taxon>
    </lineage>
</organism>
<name>CSPL3_HORVV</name>
<evidence type="ECO:0000250" key="1"/>
<evidence type="ECO:0000255" key="2"/>
<evidence type="ECO:0000256" key="3">
    <source>
        <dbReference type="SAM" id="MobiDB-lite"/>
    </source>
</evidence>
<evidence type="ECO:0000305" key="4"/>
<reference key="1">
    <citation type="journal article" date="2011" name="Plant Physiol.">
        <title>Comprehensive sequence analysis of 24,783 barley full-length cDNAs derived from 12 clone libraries.</title>
        <authorList>
            <person name="Matsumoto T."/>
            <person name="Tanaka T."/>
            <person name="Sakai H."/>
            <person name="Amano N."/>
            <person name="Kanamori H."/>
            <person name="Kurita K."/>
            <person name="Kikuta A."/>
            <person name="Kamiya K."/>
            <person name="Yamamoto M."/>
            <person name="Ikawa H."/>
            <person name="Fujii N."/>
            <person name="Hori K."/>
            <person name="Itoh T."/>
            <person name="Sato K."/>
        </authorList>
    </citation>
    <scope>NUCLEOTIDE SEQUENCE [LARGE SCALE MRNA]</scope>
    <source>
        <strain>cv. Haruna Nijo</strain>
        <tissue>Seedling root</tissue>
        <tissue>Seedling shoot</tissue>
    </source>
</reference>
<reference key="2">
    <citation type="journal article" date="2014" name="Plant Physiol.">
        <title>Functional and evolutionary analysis of the CASPARIAN STRIP MEMBRANE DOMAIN PROTEIN family.</title>
        <authorList>
            <person name="Roppolo D."/>
            <person name="Boeckmann B."/>
            <person name="Pfister A."/>
            <person name="Boutet E."/>
            <person name="Rubio M.C."/>
            <person name="Denervaud-Tendon V."/>
            <person name="Vermeer J.E."/>
            <person name="Gheyselinck J."/>
            <person name="Xenarios I."/>
            <person name="Geldner N."/>
        </authorList>
    </citation>
    <scope>GENE FAMILY</scope>
    <scope>NOMENCLATURE</scope>
</reference>
<dbReference type="EMBL" id="AK370315">
    <property type="protein sequence ID" value="BAK01516.1"/>
    <property type="molecule type" value="mRNA"/>
</dbReference>
<dbReference type="SMR" id="F2E2E4"/>
<dbReference type="FunCoup" id="F2E2E4">
    <property type="interactions" value="83"/>
</dbReference>
<dbReference type="STRING" id="112509.F2E2E4"/>
<dbReference type="InParanoid" id="F2E2E4"/>
<dbReference type="Proteomes" id="UP000011116">
    <property type="component" value="Unassembled WGS sequence"/>
</dbReference>
<dbReference type="GO" id="GO:0005886">
    <property type="term" value="C:plasma membrane"/>
    <property type="evidence" value="ECO:0007669"/>
    <property type="project" value="UniProtKB-SubCell"/>
</dbReference>
<dbReference type="InterPro" id="IPR006702">
    <property type="entry name" value="CASP_dom"/>
</dbReference>
<dbReference type="PANTHER" id="PTHR33573">
    <property type="entry name" value="CASP-LIKE PROTEIN 4A4"/>
    <property type="match status" value="1"/>
</dbReference>
<dbReference type="PANTHER" id="PTHR33573:SF36">
    <property type="entry name" value="CASP-LIKE PROTEIN 4B1"/>
    <property type="match status" value="1"/>
</dbReference>
<dbReference type="Pfam" id="PF04535">
    <property type="entry name" value="CASP_dom"/>
    <property type="match status" value="1"/>
</dbReference>
<protein>
    <recommendedName>
        <fullName>CASP-like protein 4B1</fullName>
        <shortName>HvCASPL4B1</shortName>
    </recommendedName>
</protein>
<sequence>MAMQLHAASPDSEHYVAKSPPPPPPLSPHPEPAPAFVKPKSPHVSQGGNAPVATATTPLTPGRVDRARHDHHGGGGGGDEATQLLNGIVLVLRAGAALLSFVAMALVASCRHGDWMDFLRYQEYRYLLGVSVVAFVYSAAQALKNFRRRRRGAADASFLDFAGDQAVAYLLVTASAAALPITIRMRSAVVNVFTDAIAASIALGFLAFAALALSAMLSRHA</sequence>
<proteinExistence type="evidence at transcript level"/>
<keyword id="KW-1003">Cell membrane</keyword>
<keyword id="KW-0472">Membrane</keyword>
<keyword id="KW-1185">Reference proteome</keyword>
<keyword id="KW-0812">Transmembrane</keyword>
<keyword id="KW-1133">Transmembrane helix</keyword>
<accession>F2E2E4</accession>
<feature type="chain" id="PRO_0000417770" description="CASP-like protein 4B1">
    <location>
        <begin position="1"/>
        <end position="221"/>
    </location>
</feature>
<feature type="topological domain" description="Cytoplasmic" evidence="2">
    <location>
        <begin position="1"/>
        <end position="87"/>
    </location>
</feature>
<feature type="transmembrane region" description="Helical" evidence="2">
    <location>
        <begin position="88"/>
        <end position="108"/>
    </location>
</feature>
<feature type="topological domain" description="Extracellular" evidence="2">
    <location>
        <begin position="109"/>
        <end position="125"/>
    </location>
</feature>
<feature type="transmembrane region" description="Helical" evidence="2">
    <location>
        <begin position="126"/>
        <end position="146"/>
    </location>
</feature>
<feature type="topological domain" description="Cytoplasmic" evidence="2">
    <location>
        <begin position="147"/>
        <end position="160"/>
    </location>
</feature>
<feature type="transmembrane region" description="Helical" evidence="2">
    <location>
        <begin position="161"/>
        <end position="181"/>
    </location>
</feature>
<feature type="topological domain" description="Extracellular" evidence="2">
    <location>
        <begin position="182"/>
        <end position="196"/>
    </location>
</feature>
<feature type="transmembrane region" description="Helical" evidence="2">
    <location>
        <begin position="197"/>
        <end position="217"/>
    </location>
</feature>
<feature type="topological domain" description="Cytoplasmic" evidence="2">
    <location>
        <begin position="218"/>
        <end position="221"/>
    </location>
</feature>
<feature type="region of interest" description="Disordered" evidence="3">
    <location>
        <begin position="1"/>
        <end position="78"/>
    </location>
</feature>
<feature type="compositionally biased region" description="Pro residues" evidence="3">
    <location>
        <begin position="19"/>
        <end position="33"/>
    </location>
</feature>
<feature type="compositionally biased region" description="Low complexity" evidence="3">
    <location>
        <begin position="50"/>
        <end position="62"/>
    </location>
</feature>